<organism>
    <name type="scientific">Bos taurus</name>
    <name type="common">Bovine</name>
    <dbReference type="NCBI Taxonomy" id="9913"/>
    <lineage>
        <taxon>Eukaryota</taxon>
        <taxon>Metazoa</taxon>
        <taxon>Chordata</taxon>
        <taxon>Craniata</taxon>
        <taxon>Vertebrata</taxon>
        <taxon>Euteleostomi</taxon>
        <taxon>Mammalia</taxon>
        <taxon>Eutheria</taxon>
        <taxon>Laurasiatheria</taxon>
        <taxon>Artiodactyla</taxon>
        <taxon>Ruminantia</taxon>
        <taxon>Pecora</taxon>
        <taxon>Bovidae</taxon>
        <taxon>Bovinae</taxon>
        <taxon>Bos</taxon>
    </lineage>
</organism>
<gene>
    <name type="primary">GTSF1L</name>
    <name type="synonym">FAM112A</name>
</gene>
<sequence length="169" mass="19115">MEPEALETCPYNPHHRIPLSRFQYHLASCRRKNPKKAKKMASCKYNACHVVPIKKLEEHEAACVNKSTMEEEDSLSPLKVSLPNAGQKGNRNASPVSPRLPNPDLWNVDSTNCHPMFVLKSFIPQKLVCESDTRESETDDHNPIPDCPRRRSSDRESEPPAEDTSLLKA</sequence>
<name>GTSFL_BOVIN</name>
<keyword id="KW-0479">Metal-binding</keyword>
<keyword id="KW-1185">Reference proteome</keyword>
<keyword id="KW-0677">Repeat</keyword>
<keyword id="KW-0862">Zinc</keyword>
<keyword id="KW-0863">Zinc-finger</keyword>
<dbReference type="EMBL" id="BC102599">
    <property type="protein sequence ID" value="AAI02600.1"/>
    <property type="molecule type" value="mRNA"/>
</dbReference>
<dbReference type="RefSeq" id="NP_001073069.1">
    <property type="nucleotide sequence ID" value="NM_001079601.2"/>
</dbReference>
<dbReference type="SMR" id="Q3T026"/>
<dbReference type="FunCoup" id="Q3T026">
    <property type="interactions" value="90"/>
</dbReference>
<dbReference type="STRING" id="9913.ENSBTAP00000014919"/>
<dbReference type="PaxDb" id="9913-ENSBTAP00000014919"/>
<dbReference type="Ensembl" id="ENSBTAT00000014919.5">
    <property type="protein sequence ID" value="ENSBTAP00000014919.4"/>
    <property type="gene ID" value="ENSBTAG00000011233.5"/>
</dbReference>
<dbReference type="GeneID" id="524670"/>
<dbReference type="KEGG" id="bta:524670"/>
<dbReference type="CTD" id="149699"/>
<dbReference type="VEuPathDB" id="HostDB:ENSBTAG00000011233"/>
<dbReference type="VGNC" id="VGNC:29713">
    <property type="gene designation" value="GTSF1L"/>
</dbReference>
<dbReference type="eggNOG" id="KOG4376">
    <property type="taxonomic scope" value="Eukaryota"/>
</dbReference>
<dbReference type="GeneTree" id="ENSGT00940000163226"/>
<dbReference type="HOGENOM" id="CLU_108762_1_0_1"/>
<dbReference type="InParanoid" id="Q3T026"/>
<dbReference type="OMA" id="DDPQQTF"/>
<dbReference type="OrthoDB" id="10069248at2759"/>
<dbReference type="TreeFam" id="TF323837"/>
<dbReference type="Proteomes" id="UP000009136">
    <property type="component" value="Chromosome 13"/>
</dbReference>
<dbReference type="Bgee" id="ENSBTAG00000011233">
    <property type="expression patterns" value="Expressed in semen and 14 other cell types or tissues"/>
</dbReference>
<dbReference type="GO" id="GO:0044877">
    <property type="term" value="F:protein-containing complex binding"/>
    <property type="evidence" value="ECO:0007669"/>
    <property type="project" value="Ensembl"/>
</dbReference>
<dbReference type="GO" id="GO:0008270">
    <property type="term" value="F:zinc ion binding"/>
    <property type="evidence" value="ECO:0007669"/>
    <property type="project" value="UniProtKB-KW"/>
</dbReference>
<dbReference type="InterPro" id="IPR022776">
    <property type="entry name" value="TRM13/UPF0224_CHHC_Znf_dom"/>
</dbReference>
<dbReference type="InterPro" id="IPR051591">
    <property type="entry name" value="UPF0224_FAM112_RNA_Proc"/>
</dbReference>
<dbReference type="InterPro" id="IPR036236">
    <property type="entry name" value="Znf_C2H2_sf"/>
</dbReference>
<dbReference type="PANTHER" id="PTHR21402">
    <property type="entry name" value="GAMETOCYTE SPECIFIC FACTOR 1-RELATED"/>
    <property type="match status" value="1"/>
</dbReference>
<dbReference type="PANTHER" id="PTHR21402:SF3">
    <property type="entry name" value="GAMETOCYTE-SPECIFIC FACTOR 1-LIKE"/>
    <property type="match status" value="1"/>
</dbReference>
<dbReference type="Pfam" id="PF05253">
    <property type="entry name" value="zf-U11-48K"/>
    <property type="match status" value="2"/>
</dbReference>
<dbReference type="SUPFAM" id="SSF57667">
    <property type="entry name" value="beta-beta-alpha zinc fingers"/>
    <property type="match status" value="1"/>
</dbReference>
<dbReference type="PROSITE" id="PS51800">
    <property type="entry name" value="ZF_CHHC_U11_48K"/>
    <property type="match status" value="2"/>
</dbReference>
<comment type="similarity">
    <text evidence="3">Belongs to the UPF0224 (FAM112) family.</text>
</comment>
<protein>
    <recommendedName>
        <fullName>Gametocyte-specific factor 1-like</fullName>
    </recommendedName>
    <alternativeName>
        <fullName>Protein FAM112A</fullName>
    </alternativeName>
</protein>
<reference key="1">
    <citation type="submission" date="2005-08" db="EMBL/GenBank/DDBJ databases">
        <authorList>
            <consortium name="NIH - Mammalian Gene Collection (MGC) project"/>
        </authorList>
    </citation>
    <scope>NUCLEOTIDE SEQUENCE [LARGE SCALE MRNA]</scope>
    <source>
        <strain>Crossbred X Angus</strain>
        <tissue>Liver</tissue>
    </source>
</reference>
<evidence type="ECO:0000255" key="1">
    <source>
        <dbReference type="PROSITE-ProRule" id="PRU01141"/>
    </source>
</evidence>
<evidence type="ECO:0000256" key="2">
    <source>
        <dbReference type="SAM" id="MobiDB-lite"/>
    </source>
</evidence>
<evidence type="ECO:0000305" key="3"/>
<proteinExistence type="evidence at transcript level"/>
<accession>Q3T026</accession>
<feature type="chain" id="PRO_0000226546" description="Gametocyte-specific factor 1-like">
    <location>
        <begin position="1"/>
        <end position="169"/>
    </location>
</feature>
<feature type="zinc finger region" description="CHHC U11-48K-type 1" evidence="1">
    <location>
        <begin position="6"/>
        <end position="33"/>
    </location>
</feature>
<feature type="zinc finger region" description="CHHC U11-48K-type 2" evidence="1">
    <location>
        <begin position="40"/>
        <end position="67"/>
    </location>
</feature>
<feature type="region of interest" description="Disordered" evidence="2">
    <location>
        <begin position="67"/>
        <end position="103"/>
    </location>
</feature>
<feature type="region of interest" description="Disordered" evidence="2">
    <location>
        <begin position="131"/>
        <end position="169"/>
    </location>
</feature>
<feature type="compositionally biased region" description="Basic and acidic residues" evidence="2">
    <location>
        <begin position="131"/>
        <end position="158"/>
    </location>
</feature>
<feature type="binding site" evidence="1">
    <location>
        <position position="9"/>
    </location>
    <ligand>
        <name>Zn(2+)</name>
        <dbReference type="ChEBI" id="CHEBI:29105"/>
        <label>1</label>
    </ligand>
</feature>
<feature type="binding site" evidence="1">
    <location>
        <position position="15"/>
    </location>
    <ligand>
        <name>Zn(2+)</name>
        <dbReference type="ChEBI" id="CHEBI:29105"/>
        <label>1</label>
    </ligand>
</feature>
<feature type="binding site" evidence="1">
    <location>
        <position position="25"/>
    </location>
    <ligand>
        <name>Zn(2+)</name>
        <dbReference type="ChEBI" id="CHEBI:29105"/>
        <label>1</label>
    </ligand>
</feature>
<feature type="binding site" evidence="1">
    <location>
        <position position="29"/>
    </location>
    <ligand>
        <name>Zn(2+)</name>
        <dbReference type="ChEBI" id="CHEBI:29105"/>
        <label>1</label>
    </ligand>
</feature>
<feature type="binding site" evidence="1">
    <location>
        <position position="43"/>
    </location>
    <ligand>
        <name>Zn(2+)</name>
        <dbReference type="ChEBI" id="CHEBI:29105"/>
        <label>2</label>
    </ligand>
</feature>
<feature type="binding site" evidence="1">
    <location>
        <position position="49"/>
    </location>
    <ligand>
        <name>Zn(2+)</name>
        <dbReference type="ChEBI" id="CHEBI:29105"/>
        <label>2</label>
    </ligand>
</feature>
<feature type="binding site" evidence="1">
    <location>
        <position position="59"/>
    </location>
    <ligand>
        <name>Zn(2+)</name>
        <dbReference type="ChEBI" id="CHEBI:29105"/>
        <label>2</label>
    </ligand>
</feature>
<feature type="binding site" evidence="1">
    <location>
        <position position="63"/>
    </location>
    <ligand>
        <name>Zn(2+)</name>
        <dbReference type="ChEBI" id="CHEBI:29105"/>
        <label>2</label>
    </ligand>
</feature>